<accession>P0DKL7</accession>
<comment type="subcellular location">
    <subcellularLocation>
        <location evidence="3">Secreted</location>
    </subcellularLocation>
</comment>
<comment type="tissue specificity">
    <text evidence="5">Expressed by the venom gland.</text>
</comment>
<comment type="PTM">
    <text evidence="1">Contains 7 disulfide bonds.</text>
</comment>
<comment type="mass spectrometry"/>
<comment type="similarity">
    <text evidence="4">Belongs to the phospholipase A2 family. Group II subfamily.</text>
</comment>
<evidence type="ECO:0000250" key="1"/>
<evidence type="ECO:0000256" key="2">
    <source>
        <dbReference type="SAM" id="MobiDB-lite"/>
    </source>
</evidence>
<evidence type="ECO:0000269" key="3">
    <source>
    </source>
</evidence>
<evidence type="ECO:0000305" key="4"/>
<evidence type="ECO:0000305" key="5">
    <source>
    </source>
</evidence>
<dbReference type="GO" id="GO:0005576">
    <property type="term" value="C:extracellular region"/>
    <property type="evidence" value="ECO:0007669"/>
    <property type="project" value="UniProtKB-SubCell"/>
</dbReference>
<dbReference type="GO" id="GO:0090729">
    <property type="term" value="F:toxin activity"/>
    <property type="evidence" value="ECO:0007669"/>
    <property type="project" value="UniProtKB-KW"/>
</dbReference>
<reference key="1">
    <citation type="journal article" date="2011" name="Toxicon">
        <title>cDNA cloning, structural, and functional analyses of venom phospholipases A and a Kunitz-type protease inhibitor from steppe viper Vipera ursinii renardi.</title>
        <authorList>
            <person name="Tsai I.-H."/>
            <person name="Wang Y.M."/>
            <person name="Cheng A.C."/>
            <person name="Starkov V."/>
            <person name="Osipov A."/>
            <person name="Nikitin I."/>
            <person name="Makarova Y."/>
            <person name="Ziganshin R."/>
            <person name="Utkin Y."/>
        </authorList>
    </citation>
    <scope>PROTEIN SEQUENCE</scope>
    <scope>MASS SPECTROMETRY</scope>
    <scope>CIRCULAR DICHROISM</scope>
    <scope>SUBCELLULAR LOCATION</scope>
    <source>
        <tissue>Venom</tissue>
    </source>
</reference>
<protein>
    <recommendedName>
        <fullName>Basic phospholipase A2 homolog Vur-S49 analog</fullName>
        <shortName>svPLA2 homolog</shortName>
    </recommendedName>
</protein>
<organism>
    <name type="scientific">Vipera renardi</name>
    <name type="common">Steppe viper</name>
    <name type="synonym">Vipera ursinii renardi</name>
    <dbReference type="NCBI Taxonomy" id="927686"/>
    <lineage>
        <taxon>Eukaryota</taxon>
        <taxon>Metazoa</taxon>
        <taxon>Chordata</taxon>
        <taxon>Craniata</taxon>
        <taxon>Vertebrata</taxon>
        <taxon>Euteleostomi</taxon>
        <taxon>Lepidosauria</taxon>
        <taxon>Squamata</taxon>
        <taxon>Bifurcata</taxon>
        <taxon>Unidentata</taxon>
        <taxon>Episquamata</taxon>
        <taxon>Toxicofera</taxon>
        <taxon>Serpentes</taxon>
        <taxon>Colubroidea</taxon>
        <taxon>Viperidae</taxon>
        <taxon>Viperinae</taxon>
        <taxon>Vipera</taxon>
    </lineage>
</organism>
<keyword id="KW-0903">Direct protein sequencing</keyword>
<keyword id="KW-1015">Disulfide bond</keyword>
<keyword id="KW-0964">Secreted</keyword>
<keyword id="KW-0800">Toxin</keyword>
<sequence>SVLEIGLMLQEETEKNPKTSYSI</sequence>
<name>PA2HA_VIPRE</name>
<feature type="chain" id="PRO_0000419642" description="Basic phospholipase A2 homolog Vur-S49 analog">
    <location>
        <begin position="1"/>
        <end position="23" status="greater than"/>
    </location>
</feature>
<feature type="region of interest" description="Disordered" evidence="2">
    <location>
        <begin position="1"/>
        <end position="23"/>
    </location>
</feature>
<feature type="non-terminal residue">
    <location>
        <position position="23"/>
    </location>
</feature>
<proteinExistence type="evidence at protein level"/>